<proteinExistence type="inferred from homology"/>
<sequence length="549" mass="63339">MTVTSIRRAYQVIKTALHYGLDELIPSKVKPWYFRLLRCTFFWLRNQHKDKVGGERLKLVMQELGPVYIKFGQMLSTRRDLLDDEWAEELAMLQDRVPPFDSSIAREMIELELGTSIDTYFDDFDNTPLASASISQVHTATLKSNGKAVVLKVLRPNVEAQVDADLHLMSQAANFLETVLGHGNRLRPAEVVEDYRTTIEGELNLKLEALNAVKLRNNFLDSGSLYIPYMYEELCFTRLIVMERIEGIPVSDMAALKAQGTNLKVLAERGVELFFTQVFRDNFFHADMHPGNIFVSREHPEDPYYIGLDCGIMGTLTEEDKRYLAENFLAFFNRDYHRIAQLYIESGWVSPDTDIAAFEQAVKVVCEPMFNKPLDEISFGHVLLELFRTARRFDMVVQPQLVLLEKTLLYIEGLGRQLYPQLDLWQTAKPFLEKWMSEQVGPKGMASKIKKEFPYWADKLPELPELVYDNLKMGRNFVKSQNQMLDRYLKQQQKAHKSNYLLITSAVLVICGTILFNQNATLWASYGSITVGVVLWLLGWRSRPKKRKF</sequence>
<organism>
    <name type="scientific">Shewanella woodyi (strain ATCC 51908 / MS32)</name>
    <dbReference type="NCBI Taxonomy" id="392500"/>
    <lineage>
        <taxon>Bacteria</taxon>
        <taxon>Pseudomonadati</taxon>
        <taxon>Pseudomonadota</taxon>
        <taxon>Gammaproteobacteria</taxon>
        <taxon>Alteromonadales</taxon>
        <taxon>Shewanellaceae</taxon>
        <taxon>Shewanella</taxon>
    </lineage>
</organism>
<comment type="function">
    <text evidence="1">Is probably a protein kinase regulator of UbiI activity which is involved in aerobic coenzyme Q (ubiquinone) biosynthesis.</text>
</comment>
<comment type="pathway">
    <text>Cofactor biosynthesis; ubiquinone biosynthesis [regulation].</text>
</comment>
<comment type="subcellular location">
    <subcellularLocation>
        <location evidence="1">Cell inner membrane</location>
        <topology evidence="1">Multi-pass membrane protein</topology>
    </subcellularLocation>
</comment>
<comment type="similarity">
    <text evidence="1">Belongs to the ABC1 family. UbiB subfamily.</text>
</comment>
<name>UBIB_SHEWM</name>
<feature type="chain" id="PRO_1000123928" description="Probable protein kinase UbiB">
    <location>
        <begin position="1"/>
        <end position="549"/>
    </location>
</feature>
<feature type="transmembrane region" description="Helical" evidence="1">
    <location>
        <begin position="498"/>
        <end position="518"/>
    </location>
</feature>
<feature type="transmembrane region" description="Helical" evidence="1">
    <location>
        <begin position="520"/>
        <end position="540"/>
    </location>
</feature>
<feature type="domain" description="Protein kinase" evidence="1">
    <location>
        <begin position="123"/>
        <end position="501"/>
    </location>
</feature>
<feature type="active site" description="Proton acceptor" evidence="1">
    <location>
        <position position="287"/>
    </location>
</feature>
<feature type="binding site" evidence="1">
    <location>
        <begin position="129"/>
        <end position="137"/>
    </location>
    <ligand>
        <name>ATP</name>
        <dbReference type="ChEBI" id="CHEBI:30616"/>
    </ligand>
</feature>
<feature type="binding site" evidence="1">
    <location>
        <position position="152"/>
    </location>
    <ligand>
        <name>ATP</name>
        <dbReference type="ChEBI" id="CHEBI:30616"/>
    </ligand>
</feature>
<reference key="1">
    <citation type="submission" date="2008-02" db="EMBL/GenBank/DDBJ databases">
        <title>Complete sequence of Shewanella woodyi ATCC 51908.</title>
        <authorList>
            <consortium name="US DOE Joint Genome Institute"/>
            <person name="Copeland A."/>
            <person name="Lucas S."/>
            <person name="Lapidus A."/>
            <person name="Glavina del Rio T."/>
            <person name="Dalin E."/>
            <person name="Tice H."/>
            <person name="Bruce D."/>
            <person name="Goodwin L."/>
            <person name="Pitluck S."/>
            <person name="Sims D."/>
            <person name="Brettin T."/>
            <person name="Detter J.C."/>
            <person name="Han C."/>
            <person name="Kuske C.R."/>
            <person name="Schmutz J."/>
            <person name="Larimer F."/>
            <person name="Land M."/>
            <person name="Hauser L."/>
            <person name="Kyrpides N."/>
            <person name="Lykidis A."/>
            <person name="Zhao J.-S."/>
            <person name="Richardson P."/>
        </authorList>
    </citation>
    <scope>NUCLEOTIDE SEQUENCE [LARGE SCALE GENOMIC DNA]</scope>
    <source>
        <strain>ATCC 51908 / MS32</strain>
    </source>
</reference>
<accession>B1KR05</accession>
<keyword id="KW-0067">ATP-binding</keyword>
<keyword id="KW-0997">Cell inner membrane</keyword>
<keyword id="KW-1003">Cell membrane</keyword>
<keyword id="KW-0418">Kinase</keyword>
<keyword id="KW-0472">Membrane</keyword>
<keyword id="KW-0547">Nucleotide-binding</keyword>
<keyword id="KW-1185">Reference proteome</keyword>
<keyword id="KW-0808">Transferase</keyword>
<keyword id="KW-0812">Transmembrane</keyword>
<keyword id="KW-1133">Transmembrane helix</keyword>
<keyword id="KW-0831">Ubiquinone biosynthesis</keyword>
<dbReference type="EC" id="2.7.-.-" evidence="1"/>
<dbReference type="EMBL" id="CP000961">
    <property type="protein sequence ID" value="ACA84822.1"/>
    <property type="molecule type" value="Genomic_DNA"/>
</dbReference>
<dbReference type="RefSeq" id="WP_012323170.1">
    <property type="nucleotide sequence ID" value="NC_010506.1"/>
</dbReference>
<dbReference type="SMR" id="B1KR05"/>
<dbReference type="STRING" id="392500.Swoo_0525"/>
<dbReference type="KEGG" id="swd:Swoo_0525"/>
<dbReference type="eggNOG" id="COG0661">
    <property type="taxonomic scope" value="Bacteria"/>
</dbReference>
<dbReference type="HOGENOM" id="CLU_006533_0_0_6"/>
<dbReference type="UniPathway" id="UPA00232"/>
<dbReference type="Proteomes" id="UP000002168">
    <property type="component" value="Chromosome"/>
</dbReference>
<dbReference type="GO" id="GO:0005886">
    <property type="term" value="C:plasma membrane"/>
    <property type="evidence" value="ECO:0007669"/>
    <property type="project" value="UniProtKB-SubCell"/>
</dbReference>
<dbReference type="GO" id="GO:0005524">
    <property type="term" value="F:ATP binding"/>
    <property type="evidence" value="ECO:0007669"/>
    <property type="project" value="UniProtKB-KW"/>
</dbReference>
<dbReference type="GO" id="GO:0004672">
    <property type="term" value="F:protein kinase activity"/>
    <property type="evidence" value="ECO:0007669"/>
    <property type="project" value="UniProtKB-UniRule"/>
</dbReference>
<dbReference type="GO" id="GO:0010795">
    <property type="term" value="P:regulation of ubiquinone biosynthetic process"/>
    <property type="evidence" value="ECO:0007669"/>
    <property type="project" value="UniProtKB-UniRule"/>
</dbReference>
<dbReference type="GO" id="GO:0006744">
    <property type="term" value="P:ubiquinone biosynthetic process"/>
    <property type="evidence" value="ECO:0007669"/>
    <property type="project" value="UniProtKB-UniPathway"/>
</dbReference>
<dbReference type="CDD" id="cd13972">
    <property type="entry name" value="UbiB"/>
    <property type="match status" value="1"/>
</dbReference>
<dbReference type="HAMAP" id="MF_00414">
    <property type="entry name" value="UbiB"/>
    <property type="match status" value="1"/>
</dbReference>
<dbReference type="InterPro" id="IPR004147">
    <property type="entry name" value="ABC1_dom"/>
</dbReference>
<dbReference type="InterPro" id="IPR011009">
    <property type="entry name" value="Kinase-like_dom_sf"/>
</dbReference>
<dbReference type="InterPro" id="IPR010232">
    <property type="entry name" value="UbiB"/>
</dbReference>
<dbReference type="InterPro" id="IPR045308">
    <property type="entry name" value="UbiB_bact"/>
</dbReference>
<dbReference type="InterPro" id="IPR050154">
    <property type="entry name" value="UbiB_kinase"/>
</dbReference>
<dbReference type="NCBIfam" id="NF003404">
    <property type="entry name" value="PRK04750.1"/>
    <property type="match status" value="1"/>
</dbReference>
<dbReference type="NCBIfam" id="TIGR01982">
    <property type="entry name" value="UbiB"/>
    <property type="match status" value="1"/>
</dbReference>
<dbReference type="PANTHER" id="PTHR10566">
    <property type="entry name" value="CHAPERONE-ACTIVITY OF BC1 COMPLEX CABC1 -RELATED"/>
    <property type="match status" value="1"/>
</dbReference>
<dbReference type="PANTHER" id="PTHR10566:SF113">
    <property type="entry name" value="PROTEIN ACTIVITY OF BC1 COMPLEX KINASE 7, CHLOROPLASTIC"/>
    <property type="match status" value="1"/>
</dbReference>
<dbReference type="Pfam" id="PF03109">
    <property type="entry name" value="ABC1"/>
    <property type="match status" value="1"/>
</dbReference>
<dbReference type="SUPFAM" id="SSF56112">
    <property type="entry name" value="Protein kinase-like (PK-like)"/>
    <property type="match status" value="1"/>
</dbReference>
<evidence type="ECO:0000255" key="1">
    <source>
        <dbReference type="HAMAP-Rule" id="MF_00414"/>
    </source>
</evidence>
<protein>
    <recommendedName>
        <fullName evidence="1">Probable protein kinase UbiB</fullName>
        <ecNumber evidence="1">2.7.-.-</ecNumber>
    </recommendedName>
    <alternativeName>
        <fullName evidence="1">Ubiquinone biosynthesis protein UbiB</fullName>
    </alternativeName>
</protein>
<gene>
    <name evidence="1" type="primary">ubiB</name>
    <name type="ordered locus">Swoo_0525</name>
</gene>